<comment type="function">
    <text evidence="1">Plant lipoxygenase may be involved in a number of diverse aspects of plant physiology including growth and development, pest resistance, and senescence or responses to wounding. Catalyzes the hydroperoxidation of lipids containing a cis,cis-1,4-pentadiene structure (By similarity).</text>
</comment>
<comment type="catalytic activity">
    <reaction>
        <text>(9Z,12Z)-octadecadienoate + O2 = (9S)-hydroperoxy-(10E,12Z)-octadecadienoate</text>
        <dbReference type="Rhea" id="RHEA:30291"/>
        <dbReference type="ChEBI" id="CHEBI:15379"/>
        <dbReference type="ChEBI" id="CHEBI:30245"/>
        <dbReference type="ChEBI" id="CHEBI:60955"/>
        <dbReference type="EC" id="1.13.11.58"/>
    </reaction>
</comment>
<comment type="cofactor">
    <cofactor evidence="3">
        <name>Fe cation</name>
        <dbReference type="ChEBI" id="CHEBI:24875"/>
    </cofactor>
    <text evidence="3">Binds 1 Fe cation per subunit. Iron is tightly bound.</text>
</comment>
<comment type="pathway">
    <text evidence="3">Lipid metabolism; oxylipin biosynthesis.</text>
</comment>
<comment type="similarity">
    <text evidence="5">Belongs to the lipoxygenase family.</text>
</comment>
<organism>
    <name type="scientific">Oryza sativa subsp. japonica</name>
    <name type="common">Rice</name>
    <dbReference type="NCBI Taxonomy" id="39947"/>
    <lineage>
        <taxon>Eukaryota</taxon>
        <taxon>Viridiplantae</taxon>
        <taxon>Streptophyta</taxon>
        <taxon>Embryophyta</taxon>
        <taxon>Tracheophyta</taxon>
        <taxon>Spermatophyta</taxon>
        <taxon>Magnoliopsida</taxon>
        <taxon>Liliopsida</taxon>
        <taxon>Poales</taxon>
        <taxon>Poaceae</taxon>
        <taxon>BOP clade</taxon>
        <taxon>Oryzoideae</taxon>
        <taxon>Oryzeae</taxon>
        <taxon>Oryzinae</taxon>
        <taxon>Oryza</taxon>
        <taxon>Oryza sativa</taxon>
    </lineage>
</organism>
<sequence length="866" mass="96251">MLGGIIDTITGSSKQSRLKGTVVLMRKNVLDLNDFGATVIDGLGEFLGKGVTCQLISSTAVDPNNGNRGKVGAEASLEQWLTSSLPSLTTGESRFGVTFDWDVDKLGVPGAIIVKNHHSNEFFLKTITLDDVPGRAGAVVFLANSWVYPADKYRYDRVFFANDAYLPSQMPAALKPYRDDELRNLRGDDQQGPYEEHDRVYRYDVYNDLGSPDSGNPRPILGGSPDTPYPRRGRTGRKPTTTDPDSESRLSLVEQIYVPRDERFGHLKMADFLGYSIKAIAEGIVPAIRTYVDTTPGEFDSFQDILDLYEGGLKLPDVPALEELRKRFPLQLVKDLLPAAGDYILKLPMPQIIKQDKEAWRTDEEFAREVLAGVNPMMITRLTEFPPKSSLDPSKFGDHTSMITAAHIGSNLEGLTVQQALDSNRLYILDHHDRFMPFLIDVNGLEGNFIYATRTLFFLRGDGTLAPLAIELSEPMIQGDVTAAKSTVYTPASTGVEAWVWQLAKAYVAVNDSGWHQLISHWLNTHAVMEPFVIATNRQLSVTHPVHKLLSPHYRDTMTINALARQTLINAGGIFEMTVFPGKYALWMSSMVYKNWNFTEQGLPADLIKRGVAVEDATSPYKVRLLIKDYPYAADGLEIWHAIEQWVGEYLAIYYTDDGVLRGDAELQAWWAEVREVGHGDLKGAAWWPRMDAVSELRDACTTIIWIASALHAAVNFGQYPYAGYLPNRPTVSRRRMPEPGTEAYGELGRDPERAFIRTITSQLQTIIGISLIEVLSKHSSDEVYLGQRDTPAWTSDARALEAFRRFSDRLVEIEGKVVGMNGDAGLKNRNGPAEFPYMLLYPNTSDVTGAAAGITAKGIPNSISI</sequence>
<evidence type="ECO:0000250" key="1"/>
<evidence type="ECO:0000255" key="2">
    <source>
        <dbReference type="PROSITE-ProRule" id="PRU00152"/>
    </source>
</evidence>
<evidence type="ECO:0000255" key="3">
    <source>
        <dbReference type="PROSITE-ProRule" id="PRU00726"/>
    </source>
</evidence>
<evidence type="ECO:0000256" key="4">
    <source>
        <dbReference type="SAM" id="MobiDB-lite"/>
    </source>
</evidence>
<evidence type="ECO:0000305" key="5"/>
<evidence type="ECO:0000312" key="6">
    <source>
        <dbReference type="EMBL" id="ABF98390.1"/>
    </source>
</evidence>
<evidence type="ECO:0000312" key="7">
    <source>
        <dbReference type="EMBL" id="BAF12907.1"/>
    </source>
</evidence>
<accession>Q7G794</accession>
<accession>Q10EH4</accession>
<keyword id="KW-0223">Dioxygenase</keyword>
<keyword id="KW-0275">Fatty acid biosynthesis</keyword>
<keyword id="KW-0276">Fatty acid metabolism</keyword>
<keyword id="KW-0408">Iron</keyword>
<keyword id="KW-0444">Lipid biosynthesis</keyword>
<keyword id="KW-0443">Lipid metabolism</keyword>
<keyword id="KW-0479">Metal-binding</keyword>
<keyword id="KW-0560">Oxidoreductase</keyword>
<keyword id="KW-0925">Oxylipin biosynthesis</keyword>
<keyword id="KW-1185">Reference proteome</keyword>
<reference key="1">
    <citation type="journal article" date="2005" name="Genome Res.">
        <title>Sequence, annotation, and analysis of synteny between rice chromosome 3 and diverged grass species.</title>
        <authorList>
            <consortium name="The rice chromosome 3 sequencing consortium"/>
            <person name="Buell C.R."/>
            <person name="Yuan Q."/>
            <person name="Ouyang S."/>
            <person name="Liu J."/>
            <person name="Zhu W."/>
            <person name="Wang A."/>
            <person name="Maiti R."/>
            <person name="Haas B."/>
            <person name="Wortman J."/>
            <person name="Pertea M."/>
            <person name="Jones K.M."/>
            <person name="Kim M."/>
            <person name="Overton L."/>
            <person name="Tsitrin T."/>
            <person name="Fadrosh D."/>
            <person name="Bera J."/>
            <person name="Weaver B."/>
            <person name="Jin S."/>
            <person name="Johri S."/>
            <person name="Reardon M."/>
            <person name="Webb K."/>
            <person name="Hill J."/>
            <person name="Moffat K."/>
            <person name="Tallon L."/>
            <person name="Van Aken S."/>
            <person name="Lewis M."/>
            <person name="Utterback T."/>
            <person name="Feldblyum T."/>
            <person name="Zismann V."/>
            <person name="Iobst S."/>
            <person name="Hsiao J."/>
            <person name="de Vazeille A.R."/>
            <person name="Salzberg S.L."/>
            <person name="White O."/>
            <person name="Fraser C.M."/>
            <person name="Yu Y."/>
            <person name="Kim H."/>
            <person name="Rambo T."/>
            <person name="Currie J."/>
            <person name="Collura K."/>
            <person name="Kernodle-Thompson S."/>
            <person name="Wei F."/>
            <person name="Kudrna K."/>
            <person name="Ammiraju J.S.S."/>
            <person name="Luo M."/>
            <person name="Goicoechea J.L."/>
            <person name="Wing R.A."/>
            <person name="Henry D."/>
            <person name="Oates R."/>
            <person name="Palmer M."/>
            <person name="Pries G."/>
            <person name="Saski C."/>
            <person name="Simmons J."/>
            <person name="Soderlund C."/>
            <person name="Nelson W."/>
            <person name="de la Bastide M."/>
            <person name="Spiegel L."/>
            <person name="Nascimento L."/>
            <person name="Huang E."/>
            <person name="Preston R."/>
            <person name="Zutavern T."/>
            <person name="Palmer L."/>
            <person name="O'Shaughnessy A."/>
            <person name="Dike S."/>
            <person name="McCombie W.R."/>
            <person name="Minx P."/>
            <person name="Cordum H."/>
            <person name="Wilson R."/>
            <person name="Jin W."/>
            <person name="Lee H.R."/>
            <person name="Jiang J."/>
            <person name="Jackson S."/>
        </authorList>
    </citation>
    <scope>NUCLEOTIDE SEQUENCE [LARGE SCALE GENOMIC DNA]</scope>
    <source>
        <strain>cv. Nipponbare</strain>
    </source>
</reference>
<reference key="2">
    <citation type="journal article" date="2005" name="Nature">
        <title>The map-based sequence of the rice genome.</title>
        <authorList>
            <consortium name="International rice genome sequencing project (IRGSP)"/>
        </authorList>
    </citation>
    <scope>NUCLEOTIDE SEQUENCE [LARGE SCALE GENOMIC DNA]</scope>
    <source>
        <strain>cv. Nipponbare</strain>
    </source>
</reference>
<reference key="3">
    <citation type="journal article" date="2008" name="Nucleic Acids Res.">
        <title>The rice annotation project database (RAP-DB): 2008 update.</title>
        <authorList>
            <consortium name="The rice annotation project (RAP)"/>
        </authorList>
    </citation>
    <scope>GENOME REANNOTATION</scope>
    <source>
        <strain>cv. Nipponbare</strain>
    </source>
</reference>
<reference key="4">
    <citation type="journal article" date="2013" name="Rice">
        <title>Improvement of the Oryza sativa Nipponbare reference genome using next generation sequence and optical map data.</title>
        <authorList>
            <person name="Kawahara Y."/>
            <person name="de la Bastide M."/>
            <person name="Hamilton J.P."/>
            <person name="Kanamori H."/>
            <person name="McCombie W.R."/>
            <person name="Ouyang S."/>
            <person name="Schwartz D.C."/>
            <person name="Tanaka T."/>
            <person name="Wu J."/>
            <person name="Zhou S."/>
            <person name="Childs K.L."/>
            <person name="Davidson R.M."/>
            <person name="Lin H."/>
            <person name="Quesada-Ocampo L."/>
            <person name="Vaillancourt B."/>
            <person name="Sakai H."/>
            <person name="Lee S.S."/>
            <person name="Kim J."/>
            <person name="Numa H."/>
            <person name="Itoh T."/>
            <person name="Buell C.R."/>
            <person name="Matsumoto T."/>
        </authorList>
    </citation>
    <scope>GENOME REANNOTATION</scope>
    <source>
        <strain>cv. Nipponbare</strain>
    </source>
</reference>
<name>LOX3_ORYSJ</name>
<gene>
    <name evidence="7" type="ordered locus">Os03g0700400</name>
    <name evidence="6" type="ordered locus">LOC_Os03g49350</name>
    <name type="ORF">OSJNBb0017F17.2</name>
</gene>
<proteinExistence type="inferred from homology"/>
<protein>
    <recommendedName>
        <fullName>Putative linoleate 9S-lipoxygenase 3</fullName>
        <ecNumber>1.13.11.58</ecNumber>
    </recommendedName>
    <alternativeName>
        <fullName>Lipoxygenase 3</fullName>
    </alternativeName>
</protein>
<feature type="chain" id="PRO_0000220709" description="Putative linoleate 9S-lipoxygenase 3">
    <location>
        <begin position="1"/>
        <end position="866"/>
    </location>
</feature>
<feature type="domain" description="PLAT" evidence="2">
    <location>
        <begin position="33"/>
        <end position="161"/>
    </location>
</feature>
<feature type="domain" description="Lipoxygenase" evidence="3">
    <location>
        <begin position="164"/>
        <end position="866"/>
    </location>
</feature>
<feature type="region of interest" description="Disordered" evidence="4">
    <location>
        <begin position="206"/>
        <end position="250"/>
    </location>
</feature>
<feature type="binding site" evidence="3">
    <location>
        <position position="521"/>
    </location>
    <ligand>
        <name>Fe cation</name>
        <dbReference type="ChEBI" id="CHEBI:24875"/>
        <note>catalytic</note>
    </ligand>
</feature>
<feature type="binding site" evidence="3">
    <location>
        <position position="526"/>
    </location>
    <ligand>
        <name>Fe cation</name>
        <dbReference type="ChEBI" id="CHEBI:24875"/>
        <note>catalytic</note>
    </ligand>
</feature>
<feature type="binding site" evidence="3">
    <location>
        <position position="712"/>
    </location>
    <ligand>
        <name>Fe cation</name>
        <dbReference type="ChEBI" id="CHEBI:24875"/>
        <note>catalytic</note>
    </ligand>
</feature>
<feature type="binding site" evidence="3">
    <location>
        <position position="716"/>
    </location>
    <ligand>
        <name>Fe cation</name>
        <dbReference type="ChEBI" id="CHEBI:24875"/>
        <note>catalytic</note>
    </ligand>
</feature>
<feature type="binding site" evidence="3">
    <location>
        <position position="866"/>
    </location>
    <ligand>
        <name>Fe cation</name>
        <dbReference type="ChEBI" id="CHEBI:24875"/>
        <note>catalytic</note>
    </ligand>
</feature>
<dbReference type="EC" id="1.13.11.58"/>
<dbReference type="EMBL" id="AC093017">
    <property type="protein sequence ID" value="AAX95639.1"/>
    <property type="molecule type" value="Genomic_DNA"/>
</dbReference>
<dbReference type="EMBL" id="AC097368">
    <property type="protein sequence ID" value="AAO38441.1"/>
    <property type="molecule type" value="Genomic_DNA"/>
</dbReference>
<dbReference type="EMBL" id="DP000009">
    <property type="protein sequence ID" value="ABF98390.1"/>
    <property type="molecule type" value="Genomic_DNA"/>
</dbReference>
<dbReference type="EMBL" id="AP008209">
    <property type="protein sequence ID" value="BAF12907.1"/>
    <property type="molecule type" value="Genomic_DNA"/>
</dbReference>
<dbReference type="EMBL" id="AP014959">
    <property type="status" value="NOT_ANNOTATED_CDS"/>
    <property type="molecule type" value="Genomic_DNA"/>
</dbReference>
<dbReference type="RefSeq" id="XP_015632657.1">
    <property type="nucleotide sequence ID" value="XM_015777171.1"/>
</dbReference>
<dbReference type="SMR" id="Q7G794"/>
<dbReference type="FunCoup" id="Q7G794">
    <property type="interactions" value="433"/>
</dbReference>
<dbReference type="STRING" id="39947.Q7G794"/>
<dbReference type="PaxDb" id="39947-Q7G794"/>
<dbReference type="EnsemblPlants" id="Os03t0700400-01">
    <property type="protein sequence ID" value="Os03t0700400-01"/>
    <property type="gene ID" value="Os03g0700400"/>
</dbReference>
<dbReference type="Gramene" id="Os03t0700400-01">
    <property type="protein sequence ID" value="Os03t0700400-01"/>
    <property type="gene ID" value="Os03g0700400"/>
</dbReference>
<dbReference type="KEGG" id="dosa:Os03g0700400"/>
<dbReference type="InParanoid" id="Q7G794"/>
<dbReference type="OrthoDB" id="407298at2759"/>
<dbReference type="UniPathway" id="UPA00382"/>
<dbReference type="Proteomes" id="UP000000763">
    <property type="component" value="Chromosome 3"/>
</dbReference>
<dbReference type="Proteomes" id="UP000059680">
    <property type="component" value="Chromosome 3"/>
</dbReference>
<dbReference type="GO" id="GO:1990136">
    <property type="term" value="F:linoleate 9S-lipoxygenase activity"/>
    <property type="evidence" value="ECO:0007669"/>
    <property type="project" value="UniProtKB-EC"/>
</dbReference>
<dbReference type="GO" id="GO:0046872">
    <property type="term" value="F:metal ion binding"/>
    <property type="evidence" value="ECO:0007669"/>
    <property type="project" value="UniProtKB-KW"/>
</dbReference>
<dbReference type="GO" id="GO:0016702">
    <property type="term" value="F:oxidoreductase activity, acting on single donors with incorporation of molecular oxygen, incorporation of two atoms of oxygen"/>
    <property type="evidence" value="ECO:0000318"/>
    <property type="project" value="GO_Central"/>
</dbReference>
<dbReference type="GO" id="GO:0006633">
    <property type="term" value="P:fatty acid biosynthetic process"/>
    <property type="evidence" value="ECO:0007669"/>
    <property type="project" value="UniProtKB-KW"/>
</dbReference>
<dbReference type="GO" id="GO:0034440">
    <property type="term" value="P:lipid oxidation"/>
    <property type="evidence" value="ECO:0000318"/>
    <property type="project" value="GO_Central"/>
</dbReference>
<dbReference type="GO" id="GO:0031408">
    <property type="term" value="P:oxylipin biosynthetic process"/>
    <property type="evidence" value="ECO:0007669"/>
    <property type="project" value="UniProtKB-UniPathway"/>
</dbReference>
<dbReference type="CDD" id="cd01751">
    <property type="entry name" value="PLAT_LH2"/>
    <property type="match status" value="1"/>
</dbReference>
<dbReference type="FunFam" id="1.20.245.10:FF:000002">
    <property type="entry name" value="Lipoxygenase"/>
    <property type="match status" value="1"/>
</dbReference>
<dbReference type="FunFam" id="2.60.60.20:FF:000015">
    <property type="entry name" value="Lipoxygenase"/>
    <property type="match status" value="1"/>
</dbReference>
<dbReference type="FunFam" id="3.10.450.60:FF:000002">
    <property type="entry name" value="Lipoxygenase"/>
    <property type="match status" value="1"/>
</dbReference>
<dbReference type="FunFam" id="4.10.372.10:FF:000001">
    <property type="entry name" value="Lipoxygenase"/>
    <property type="match status" value="1"/>
</dbReference>
<dbReference type="FunFam" id="4.10.375.10:FF:000001">
    <property type="entry name" value="Lipoxygenase"/>
    <property type="match status" value="1"/>
</dbReference>
<dbReference type="Gene3D" id="3.10.450.60">
    <property type="match status" value="1"/>
</dbReference>
<dbReference type="Gene3D" id="4.10.375.10">
    <property type="entry name" value="Lipoxygenase-1, Domain 2"/>
    <property type="match status" value="1"/>
</dbReference>
<dbReference type="Gene3D" id="4.10.372.10">
    <property type="entry name" value="Lipoxygenase-1, Domain 3"/>
    <property type="match status" value="1"/>
</dbReference>
<dbReference type="Gene3D" id="1.20.245.10">
    <property type="entry name" value="Lipoxygenase-1, Domain 5"/>
    <property type="match status" value="1"/>
</dbReference>
<dbReference type="Gene3D" id="2.60.60.20">
    <property type="entry name" value="PLAT/LH2 domain"/>
    <property type="match status" value="1"/>
</dbReference>
<dbReference type="InterPro" id="IPR000907">
    <property type="entry name" value="LipOase"/>
</dbReference>
<dbReference type="InterPro" id="IPR013819">
    <property type="entry name" value="LipOase_C"/>
</dbReference>
<dbReference type="InterPro" id="IPR036226">
    <property type="entry name" value="LipOase_C_sf"/>
</dbReference>
<dbReference type="InterPro" id="IPR020834">
    <property type="entry name" value="LipOase_CS"/>
</dbReference>
<dbReference type="InterPro" id="IPR020833">
    <property type="entry name" value="LipOase_Fe_BS"/>
</dbReference>
<dbReference type="InterPro" id="IPR001246">
    <property type="entry name" value="LipOase_plant"/>
</dbReference>
<dbReference type="InterPro" id="IPR042057">
    <property type="entry name" value="Lipoxy_PLAT/LH2"/>
</dbReference>
<dbReference type="InterPro" id="IPR027433">
    <property type="entry name" value="Lipoxygenase_dom_3"/>
</dbReference>
<dbReference type="InterPro" id="IPR001024">
    <property type="entry name" value="PLAT/LH2_dom"/>
</dbReference>
<dbReference type="InterPro" id="IPR036392">
    <property type="entry name" value="PLAT/LH2_dom_sf"/>
</dbReference>
<dbReference type="PANTHER" id="PTHR11771">
    <property type="entry name" value="LIPOXYGENASE"/>
    <property type="match status" value="1"/>
</dbReference>
<dbReference type="Pfam" id="PF00305">
    <property type="entry name" value="Lipoxygenase"/>
    <property type="match status" value="1"/>
</dbReference>
<dbReference type="Pfam" id="PF01477">
    <property type="entry name" value="PLAT"/>
    <property type="match status" value="1"/>
</dbReference>
<dbReference type="PRINTS" id="PR00087">
    <property type="entry name" value="LIPOXYGENASE"/>
</dbReference>
<dbReference type="PRINTS" id="PR00468">
    <property type="entry name" value="PLTLPOXGNASE"/>
</dbReference>
<dbReference type="SMART" id="SM00308">
    <property type="entry name" value="LH2"/>
    <property type="match status" value="1"/>
</dbReference>
<dbReference type="SUPFAM" id="SSF49723">
    <property type="entry name" value="Lipase/lipooxygenase domain (PLAT/LH2 domain)"/>
    <property type="match status" value="1"/>
</dbReference>
<dbReference type="SUPFAM" id="SSF48484">
    <property type="entry name" value="Lipoxigenase"/>
    <property type="match status" value="1"/>
</dbReference>
<dbReference type="PROSITE" id="PS00711">
    <property type="entry name" value="LIPOXYGENASE_1"/>
    <property type="match status" value="1"/>
</dbReference>
<dbReference type="PROSITE" id="PS00081">
    <property type="entry name" value="LIPOXYGENASE_2"/>
    <property type="match status" value="1"/>
</dbReference>
<dbReference type="PROSITE" id="PS51393">
    <property type="entry name" value="LIPOXYGENASE_3"/>
    <property type="match status" value="1"/>
</dbReference>
<dbReference type="PROSITE" id="PS50095">
    <property type="entry name" value="PLAT"/>
    <property type="match status" value="1"/>
</dbReference>